<sequence>MAIVKRGGRTKTKQQQVPAKSSGGGSSGGIKKAEFDITKKKEVGVSDLTLLSKITDEAINENLHKRFMNDTIYTYIGHVLISVNPFRDLGIYTLENLNKYKGRNRLEVPPHVFAIAESMYYNLKSYGENQCVIISGESGAGKTEAAKQIMQYIANVSVNQDNVEISKIKDMVLATNPLLESFGCAKTLRNNNSSRHGKYLEIKFSEGNYQPIAAHITNYLLEKQRVVSQITNERNFHIFYQFTKHCPPQYQQMFGIQGPETYVYTSAAKCINVDGVDDAKDFQDTLNAMKIIGLTQQEQDNIFRMLASILWIGNISFVEDENGNAAIRDDSVTNFAAYLLDVNPEILKKAIIERTIETSHGMRRGSTYHSPLNIVQATAVRDALAKGIYNNLFEWIVERVNISLAGSQQQSSKSIGILDIYGFEIFERNSFEQICINYVNEKLQQIFIQLTLKAEQDEYVQEQIKWTPIDYFNNKVVCDLIEATRPQPGLFAALNDSIKTAHADSEAADQVFAQRLSMVGASNRHFEDRRGKFIIKHYAGDVTYDVAGMTDKNKDAMLRDLLELVSTSQNSFINQVLFPPDLLAQLTDSRKRPETASDKIKKSANILVDTLSQCTPSYIRTIKPNQTKKPRDYDNQQVLHQIKYLGLKENVRIRRAGFAYRSTFERFVQRFYLLSPATGYAGDYIWRGDDISAVKEILKSCHIPPSEYQLGTTKVFIKTPETLFALEDMRDKYWHNMAARIQRAWRRYVKRKEDAAKTIQNAWRIKKHGNQFEQFRDYGNGLLQGRKERRRMSMLGSRAFMGDYLGCNYKSGYGRFIINQVGINESVIFSSKGEILLSKFGRSSKRLPRIFIVTKTSIYIIAEVLVEKRLQLQKEFTIPISGINYLGLSTFQDNWVAISLHSPTPTTPDVFINLDFKTELVAQLKKLNPGITIKIGPTIEYQKKPGKFHTVKFIIGAGPEIPNNGDHYKSGTVSVKQGLPASSKNPKRPRGVSSKVDYSKYYNRGAARKTAAAAQATPRYNQPTPVANSGYSAQPAYPIPQQPQQYQPQQSQQQTPYPTQSSIPSVNQNQSRQPQRKVPPPAPSLQVSAAQAALGKSPTQQRQTPAHNPVASPNRPASTTIATTTSHTSRPVKKTAPAPPVKKTAPPPPPPTLVKPKFPTYKAMFDYDGSVAGSIPLVKDTVYYVTQVNGKWGLVKTMDETKEGWSPIDYLKECSPNETQKSAPPPPPPPPAATASAGANGASNPISTTTSTNTTTSSHTTNATSNGSLGNGLADALKAKKQEETTLAGSLADALKKRQGATRDSDDEEEEDDDDW</sequence>
<dbReference type="EMBL" id="CP017626">
    <property type="protein sequence ID" value="AOW29251.1"/>
    <property type="molecule type" value="Genomic_DNA"/>
</dbReference>
<dbReference type="RefSeq" id="XP_710986.2">
    <property type="nucleotide sequence ID" value="XM_705894.2"/>
</dbReference>
<dbReference type="SMR" id="Q59MQ0"/>
<dbReference type="BioGRID" id="1230497">
    <property type="interactions" value="1"/>
</dbReference>
<dbReference type="FunCoup" id="Q59MQ0">
    <property type="interactions" value="369"/>
</dbReference>
<dbReference type="STRING" id="237561.Q59MQ0"/>
<dbReference type="iPTMnet" id="Q59MQ0"/>
<dbReference type="EnsemblFungi" id="C4_05100C_A-T">
    <property type="protein sequence ID" value="C4_05100C_A-T-p1"/>
    <property type="gene ID" value="C4_05100C_A"/>
</dbReference>
<dbReference type="GeneID" id="3647404"/>
<dbReference type="KEGG" id="cal:CAALFM_C405100CA"/>
<dbReference type="CGD" id="CAL0000199209">
    <property type="gene designation" value="MYO5"/>
</dbReference>
<dbReference type="VEuPathDB" id="FungiDB:C4_05100C_A"/>
<dbReference type="HOGENOM" id="CLU_000192_7_6_1"/>
<dbReference type="InParanoid" id="Q59MQ0"/>
<dbReference type="OrthoDB" id="6108017at2759"/>
<dbReference type="PRO" id="PR:Q59MQ0"/>
<dbReference type="Proteomes" id="UP000000559">
    <property type="component" value="Chromosome 4"/>
</dbReference>
<dbReference type="GO" id="GO:0030479">
    <property type="term" value="C:actin cortical patch"/>
    <property type="evidence" value="ECO:0000314"/>
    <property type="project" value="CGD"/>
</dbReference>
<dbReference type="GO" id="GO:0015629">
    <property type="term" value="C:actin cytoskeleton"/>
    <property type="evidence" value="ECO:0000318"/>
    <property type="project" value="GO_Central"/>
</dbReference>
<dbReference type="GO" id="GO:0051285">
    <property type="term" value="C:cell cortex of cell tip"/>
    <property type="evidence" value="ECO:0007669"/>
    <property type="project" value="EnsemblFungi"/>
</dbReference>
<dbReference type="GO" id="GO:0051286">
    <property type="term" value="C:cell tip"/>
    <property type="evidence" value="ECO:0000318"/>
    <property type="project" value="GO_Central"/>
</dbReference>
<dbReference type="GO" id="GO:0005935">
    <property type="term" value="C:cellular bud neck"/>
    <property type="evidence" value="ECO:0000314"/>
    <property type="project" value="CGD"/>
</dbReference>
<dbReference type="GO" id="GO:0005934">
    <property type="term" value="C:cellular bud tip"/>
    <property type="evidence" value="ECO:0000314"/>
    <property type="project" value="CGD"/>
</dbReference>
<dbReference type="GO" id="GO:0005737">
    <property type="term" value="C:cytoplasm"/>
    <property type="evidence" value="ECO:0000318"/>
    <property type="project" value="GO_Central"/>
</dbReference>
<dbReference type="GO" id="GO:0001411">
    <property type="term" value="C:hyphal tip"/>
    <property type="evidence" value="ECO:0000314"/>
    <property type="project" value="CGD"/>
</dbReference>
<dbReference type="GO" id="GO:0043332">
    <property type="term" value="C:mating projection tip"/>
    <property type="evidence" value="ECO:0000314"/>
    <property type="project" value="CGD"/>
</dbReference>
<dbReference type="GO" id="GO:0031097">
    <property type="term" value="C:medial cortex"/>
    <property type="evidence" value="ECO:0007669"/>
    <property type="project" value="EnsemblFungi"/>
</dbReference>
<dbReference type="GO" id="GO:0045160">
    <property type="term" value="C:myosin I complex"/>
    <property type="evidence" value="ECO:0007669"/>
    <property type="project" value="EnsemblFungi"/>
</dbReference>
<dbReference type="GO" id="GO:0005886">
    <property type="term" value="C:plasma membrane"/>
    <property type="evidence" value="ECO:0000318"/>
    <property type="project" value="GO_Central"/>
</dbReference>
<dbReference type="GO" id="GO:0044853">
    <property type="term" value="C:plasma membrane raft"/>
    <property type="evidence" value="ECO:0007669"/>
    <property type="project" value="EnsemblFungi"/>
</dbReference>
<dbReference type="GO" id="GO:0005628">
    <property type="term" value="C:prospore membrane"/>
    <property type="evidence" value="ECO:0007669"/>
    <property type="project" value="EnsemblFungi"/>
</dbReference>
<dbReference type="GO" id="GO:0051015">
    <property type="term" value="F:actin filament binding"/>
    <property type="evidence" value="ECO:0000318"/>
    <property type="project" value="GO_Central"/>
</dbReference>
<dbReference type="GO" id="GO:0071933">
    <property type="term" value="F:Arp2/3 complex binding"/>
    <property type="evidence" value="ECO:0007669"/>
    <property type="project" value="EnsemblFungi"/>
</dbReference>
<dbReference type="GO" id="GO:0005524">
    <property type="term" value="F:ATP binding"/>
    <property type="evidence" value="ECO:0007669"/>
    <property type="project" value="UniProtKB-KW"/>
</dbReference>
<dbReference type="GO" id="GO:0016787">
    <property type="term" value="F:hydrolase activity"/>
    <property type="evidence" value="ECO:0007669"/>
    <property type="project" value="UniProtKB-KW"/>
</dbReference>
<dbReference type="GO" id="GO:0000146">
    <property type="term" value="F:microfilament motor activity"/>
    <property type="evidence" value="ECO:0000318"/>
    <property type="project" value="GO_Central"/>
</dbReference>
<dbReference type="GO" id="GO:0000147">
    <property type="term" value="P:actin cortical patch assembly"/>
    <property type="evidence" value="ECO:0007669"/>
    <property type="project" value="EnsemblFungi"/>
</dbReference>
<dbReference type="GO" id="GO:0051666">
    <property type="term" value="P:actin cortical patch localization"/>
    <property type="evidence" value="ECO:0000315"/>
    <property type="project" value="CGD"/>
</dbReference>
<dbReference type="GO" id="GO:0030036">
    <property type="term" value="P:actin cytoskeleton organization"/>
    <property type="evidence" value="ECO:0000315"/>
    <property type="project" value="CGD"/>
</dbReference>
<dbReference type="GO" id="GO:0007015">
    <property type="term" value="P:actin filament organization"/>
    <property type="evidence" value="ECO:0000318"/>
    <property type="project" value="GO_Central"/>
</dbReference>
<dbReference type="GO" id="GO:0007121">
    <property type="term" value="P:bipolar cellular bud site selection"/>
    <property type="evidence" value="ECO:0000315"/>
    <property type="project" value="CGD"/>
</dbReference>
<dbReference type="GO" id="GO:0036187">
    <property type="term" value="P:cell growth mode switching, budding to filamentous"/>
    <property type="evidence" value="ECO:0000315"/>
    <property type="project" value="CGD"/>
</dbReference>
<dbReference type="GO" id="GO:0009267">
    <property type="term" value="P:cellular response to starvation"/>
    <property type="evidence" value="ECO:0000315"/>
    <property type="project" value="CGD"/>
</dbReference>
<dbReference type="GO" id="GO:0006897">
    <property type="term" value="P:endocytosis"/>
    <property type="evidence" value="ECO:0000315"/>
    <property type="project" value="CGD"/>
</dbReference>
<dbReference type="GO" id="GO:0030447">
    <property type="term" value="P:filamentous growth"/>
    <property type="evidence" value="ECO:0000315"/>
    <property type="project" value="CGD"/>
</dbReference>
<dbReference type="GO" id="GO:0036180">
    <property type="term" value="P:filamentous growth of a population of unicellular organisms in response to biotic stimulus"/>
    <property type="evidence" value="ECO:0000315"/>
    <property type="project" value="CGD"/>
</dbReference>
<dbReference type="GO" id="GO:0036170">
    <property type="term" value="P:filamentous growth of a population of unicellular organisms in response to starvation"/>
    <property type="evidence" value="ECO:0000315"/>
    <property type="project" value="CGD"/>
</dbReference>
<dbReference type="GO" id="GO:0031505">
    <property type="term" value="P:fungal-type cell wall organization"/>
    <property type="evidence" value="ECO:0000315"/>
    <property type="project" value="CGD"/>
</dbReference>
<dbReference type="GO" id="GO:0036166">
    <property type="term" value="P:phenotypic switching"/>
    <property type="evidence" value="ECO:0000315"/>
    <property type="project" value="CGD"/>
</dbReference>
<dbReference type="GO" id="GO:0006898">
    <property type="term" value="P:receptor-mediated endocytosis"/>
    <property type="evidence" value="ECO:0000315"/>
    <property type="project" value="CGD"/>
</dbReference>
<dbReference type="CDD" id="cd01378">
    <property type="entry name" value="MYSc_Myo1"/>
    <property type="match status" value="1"/>
</dbReference>
<dbReference type="CDD" id="cd11858">
    <property type="entry name" value="SH3_Myosin-I_fungi"/>
    <property type="match status" value="1"/>
</dbReference>
<dbReference type="FunFam" id="1.10.10.820:FF:000001">
    <property type="entry name" value="Myosin heavy chain"/>
    <property type="match status" value="1"/>
</dbReference>
<dbReference type="FunFam" id="1.20.120.720:FF:000015">
    <property type="entry name" value="Myosin I"/>
    <property type="match status" value="1"/>
</dbReference>
<dbReference type="FunFam" id="1.20.5.4820:FF:000004">
    <property type="entry name" value="Myosin IE"/>
    <property type="match status" value="1"/>
</dbReference>
<dbReference type="FunFam" id="1.20.58.530:FF:000007">
    <property type="entry name" value="Myosin IE"/>
    <property type="match status" value="1"/>
</dbReference>
<dbReference type="Gene3D" id="1.10.10.820">
    <property type="match status" value="1"/>
</dbReference>
<dbReference type="Gene3D" id="1.20.5.4820">
    <property type="match status" value="1"/>
</dbReference>
<dbReference type="Gene3D" id="1.20.58.530">
    <property type="match status" value="1"/>
</dbReference>
<dbReference type="Gene3D" id="3.40.850.10">
    <property type="entry name" value="Kinesin motor domain"/>
    <property type="match status" value="1"/>
</dbReference>
<dbReference type="Gene3D" id="1.20.120.720">
    <property type="entry name" value="Myosin VI head, motor domain, U50 subdomain"/>
    <property type="match status" value="1"/>
</dbReference>
<dbReference type="Gene3D" id="2.30.30.40">
    <property type="entry name" value="SH3 Domains"/>
    <property type="match status" value="1"/>
</dbReference>
<dbReference type="InterPro" id="IPR035535">
    <property type="entry name" value="Fungal_myosin-I_SH3"/>
</dbReference>
<dbReference type="InterPro" id="IPR036961">
    <property type="entry name" value="Kinesin_motor_dom_sf"/>
</dbReference>
<dbReference type="InterPro" id="IPR054489">
    <property type="entry name" value="Myo1_CA"/>
</dbReference>
<dbReference type="InterPro" id="IPR001609">
    <property type="entry name" value="Myosin_head_motor_dom-like"/>
</dbReference>
<dbReference type="InterPro" id="IPR010926">
    <property type="entry name" value="Myosin_TH1"/>
</dbReference>
<dbReference type="InterPro" id="IPR036072">
    <property type="entry name" value="MYSc_Myo1"/>
</dbReference>
<dbReference type="InterPro" id="IPR027417">
    <property type="entry name" value="P-loop_NTPase"/>
</dbReference>
<dbReference type="InterPro" id="IPR036028">
    <property type="entry name" value="SH3-like_dom_sf"/>
</dbReference>
<dbReference type="InterPro" id="IPR001452">
    <property type="entry name" value="SH3_domain"/>
</dbReference>
<dbReference type="PANTHER" id="PTHR13140">
    <property type="entry name" value="MYOSIN"/>
    <property type="match status" value="1"/>
</dbReference>
<dbReference type="PANTHER" id="PTHR13140:SF837">
    <property type="entry name" value="MYOSIN-3-RELATED"/>
    <property type="match status" value="1"/>
</dbReference>
<dbReference type="Pfam" id="PF22773">
    <property type="entry name" value="Myo1_CA"/>
    <property type="match status" value="1"/>
</dbReference>
<dbReference type="Pfam" id="PF00063">
    <property type="entry name" value="Myosin_head"/>
    <property type="match status" value="1"/>
</dbReference>
<dbReference type="Pfam" id="PF06017">
    <property type="entry name" value="Myosin_TH1"/>
    <property type="match status" value="1"/>
</dbReference>
<dbReference type="PRINTS" id="PR00193">
    <property type="entry name" value="MYOSINHEAVY"/>
</dbReference>
<dbReference type="SMART" id="SM00242">
    <property type="entry name" value="MYSc"/>
    <property type="match status" value="1"/>
</dbReference>
<dbReference type="SMART" id="SM00326">
    <property type="entry name" value="SH3"/>
    <property type="match status" value="1"/>
</dbReference>
<dbReference type="SUPFAM" id="SSF52540">
    <property type="entry name" value="P-loop containing nucleoside triphosphate hydrolases"/>
    <property type="match status" value="1"/>
</dbReference>
<dbReference type="SUPFAM" id="SSF50044">
    <property type="entry name" value="SH3-domain"/>
    <property type="match status" value="1"/>
</dbReference>
<dbReference type="PROSITE" id="PS51456">
    <property type="entry name" value="MYOSIN_MOTOR"/>
    <property type="match status" value="1"/>
</dbReference>
<dbReference type="PROSITE" id="PS50002">
    <property type="entry name" value="SH3"/>
    <property type="match status" value="1"/>
</dbReference>
<dbReference type="PROSITE" id="PS51757">
    <property type="entry name" value="TH1"/>
    <property type="match status" value="1"/>
</dbReference>
<accession>Q59MQ0</accession>
<accession>A0A1D8PM91</accession>
<accession>Q59MN7</accession>
<keyword id="KW-0009">Actin-binding</keyword>
<keyword id="KW-0067">ATP-binding</keyword>
<keyword id="KW-0963">Cytoplasm</keyword>
<keyword id="KW-0206">Cytoskeleton</keyword>
<keyword id="KW-0378">Hydrolase</keyword>
<keyword id="KW-0505">Motor protein</keyword>
<keyword id="KW-0518">Myosin</keyword>
<keyword id="KW-0547">Nucleotide-binding</keyword>
<keyword id="KW-0597">Phosphoprotein</keyword>
<keyword id="KW-1185">Reference proteome</keyword>
<keyword id="KW-0677">Repeat</keyword>
<keyword id="KW-0728">SH3 domain</keyword>
<comment type="function">
    <text evidence="1 7 8">Type-I myosin implicated in the organization of the actin cytoskeleton. Required for proper actin cytoskeleton polarization and for the internalization step in endocytosis. At the cell cortex, assembles in patch-like structures together with proteins from the actin-polymerizing machinery and promotes actin assembly. Functions as actin nucleation-promoting factor (NPF) for the Arp2/3 complex (By similarity). Plays a role in chitin deposition in the cell wall, in determination of the budding pattern, and is required for hyphae formation.</text>
</comment>
<comment type="subcellular location">
    <subcellularLocation>
        <location evidence="7 8">Cytoplasm</location>
        <location evidence="7 8">Cytoskeleton</location>
        <location evidence="7 8">Actin patch</location>
    </subcellularLocation>
    <text>Localizes to cortical patch-like structures. Enriched at sites of polarized growth, like the growing bud tip, the mother-bud neck after cytokinesis, and the hyphal tip.</text>
</comment>
<comment type="domain">
    <text evidence="1">The myosin motor domain displays actin-stimulated ATPase activity and generates a mechanochemical force.</text>
</comment>
<comment type="domain">
    <text evidence="1">The tail domain participates in molecular interactions that specify the role of the motor domain (By similarity). It is composed of several tail homology (TH) domains, namely a putative phospholipid-binding myosin tail domain (also named TH1), an Ala- and Pro-rich domain (TH2), followed by an SH3 domain and a C-terminal acidic domain (TH3). The IQ domain and the TH1 region are essential for hyphal growth and for endocytosis. The SH3 domain together with the TH3 region are required for the organization of the cortical actin.</text>
</comment>
<comment type="PTM">
    <text evidence="7">Phosphorylation of the TEDS site (Ser-366) is required for the polarization of the actin cytoskeleton. Phosphorylation probably activates the myosin-I ATPase activity.</text>
</comment>
<comment type="similarity">
    <text evidence="9">Belongs to the TRAFAC class myosin-kinesin ATPase superfamily. Myosin family.</text>
</comment>
<reference key="1">
    <citation type="journal article" date="2004" name="Proc. Natl. Acad. Sci. U.S.A.">
        <title>The diploid genome sequence of Candida albicans.</title>
        <authorList>
            <person name="Jones T."/>
            <person name="Federspiel N.A."/>
            <person name="Chibana H."/>
            <person name="Dungan J."/>
            <person name="Kalman S."/>
            <person name="Magee B.B."/>
            <person name="Newport G."/>
            <person name="Thorstenson Y.R."/>
            <person name="Agabian N."/>
            <person name="Magee P.T."/>
            <person name="Davis R.W."/>
            <person name="Scherer S."/>
        </authorList>
    </citation>
    <scope>NUCLEOTIDE SEQUENCE [LARGE SCALE GENOMIC DNA]</scope>
    <source>
        <strain>SC5314 / ATCC MYA-2876</strain>
    </source>
</reference>
<reference key="2">
    <citation type="journal article" date="2007" name="Genome Biol.">
        <title>Assembly of the Candida albicans genome into sixteen supercontigs aligned on the eight chromosomes.</title>
        <authorList>
            <person name="van het Hoog M."/>
            <person name="Rast T.J."/>
            <person name="Martchenko M."/>
            <person name="Grindle S."/>
            <person name="Dignard D."/>
            <person name="Hogues H."/>
            <person name="Cuomo C."/>
            <person name="Berriman M."/>
            <person name="Scherer S."/>
            <person name="Magee B.B."/>
            <person name="Whiteway M."/>
            <person name="Chibana H."/>
            <person name="Nantel A."/>
            <person name="Magee P.T."/>
        </authorList>
    </citation>
    <scope>GENOME REANNOTATION</scope>
    <source>
        <strain>SC5314 / ATCC MYA-2876</strain>
    </source>
</reference>
<reference key="3">
    <citation type="journal article" date="2013" name="Genome Biol.">
        <title>Assembly of a phased diploid Candida albicans genome facilitates allele-specific measurements and provides a simple model for repeat and indel structure.</title>
        <authorList>
            <person name="Muzzey D."/>
            <person name="Schwartz K."/>
            <person name="Weissman J.S."/>
            <person name="Sherlock G."/>
        </authorList>
    </citation>
    <scope>NUCLEOTIDE SEQUENCE [LARGE SCALE GENOMIC DNA]</scope>
    <scope>GENOME REANNOTATION</scope>
    <source>
        <strain>SC5314 / ATCC MYA-2876</strain>
    </source>
</reference>
<reference key="4">
    <citation type="journal article" date="2002" name="Eukaryot. Cell">
        <title>Myosin I is required for hypha formation in Candida albicans.</title>
        <authorList>
            <person name="Oberholzer U."/>
            <person name="Marcil A."/>
            <person name="Leberer E."/>
            <person name="Thomas D.Y."/>
            <person name="Whiteway M."/>
        </authorList>
    </citation>
    <scope>FUNCTION</scope>
    <scope>SUBCELLULAR LOCATION</scope>
    <scope>PHOSPHORYLATION AT SER-366</scope>
    <scope>MUTAGENESIS OF SER-366</scope>
</reference>
<reference key="5">
    <citation type="journal article" date="2004" name="Eukaryot. Cell">
        <title>Functional characterization of myosin I tail regions in Candida albicans.</title>
        <authorList>
            <person name="Oberholzer U."/>
            <person name="Iouk T.L."/>
            <person name="Thomas D.Y."/>
            <person name="Whiteway M."/>
        </authorList>
    </citation>
    <scope>FUNCTION</scope>
    <scope>SUBCELLULAR LOCATION</scope>
</reference>
<proteinExistence type="evidence at protein level"/>
<evidence type="ECO:0000250" key="1"/>
<evidence type="ECO:0000255" key="2"/>
<evidence type="ECO:0000255" key="3">
    <source>
        <dbReference type="PROSITE-ProRule" id="PRU00192"/>
    </source>
</evidence>
<evidence type="ECO:0000255" key="4">
    <source>
        <dbReference type="PROSITE-ProRule" id="PRU00782"/>
    </source>
</evidence>
<evidence type="ECO:0000255" key="5">
    <source>
        <dbReference type="PROSITE-ProRule" id="PRU01093"/>
    </source>
</evidence>
<evidence type="ECO:0000256" key="6">
    <source>
        <dbReference type="SAM" id="MobiDB-lite"/>
    </source>
</evidence>
<evidence type="ECO:0000269" key="7">
    <source>
    </source>
</evidence>
<evidence type="ECO:0000269" key="8">
    <source>
    </source>
</evidence>
<evidence type="ECO:0000305" key="9"/>
<organism>
    <name type="scientific">Candida albicans (strain SC5314 / ATCC MYA-2876)</name>
    <name type="common">Yeast</name>
    <dbReference type="NCBI Taxonomy" id="237561"/>
    <lineage>
        <taxon>Eukaryota</taxon>
        <taxon>Fungi</taxon>
        <taxon>Dikarya</taxon>
        <taxon>Ascomycota</taxon>
        <taxon>Saccharomycotina</taxon>
        <taxon>Pichiomycetes</taxon>
        <taxon>Debaryomycetaceae</taxon>
        <taxon>Candida/Lodderomyces clade</taxon>
        <taxon>Candida</taxon>
    </lineage>
</organism>
<feature type="chain" id="PRO_0000338543" description="Myosin-5">
    <location>
        <begin position="1"/>
        <end position="1316"/>
    </location>
</feature>
<feature type="domain" description="Myosin motor" evidence="4">
    <location>
        <begin position="43"/>
        <end position="731"/>
    </location>
</feature>
<feature type="domain" description="IQ 1">
    <location>
        <begin position="735"/>
        <end position="755"/>
    </location>
</feature>
<feature type="domain" description="IQ 2">
    <location>
        <begin position="756"/>
        <end position="781"/>
    </location>
</feature>
<feature type="domain" description="TH1" evidence="5">
    <location>
        <begin position="789"/>
        <end position="981"/>
    </location>
</feature>
<feature type="domain" description="SH3" evidence="3">
    <location>
        <begin position="1156"/>
        <end position="1216"/>
    </location>
</feature>
<feature type="region of interest" description="Disordered" evidence="6">
    <location>
        <begin position="1"/>
        <end position="29"/>
    </location>
</feature>
<feature type="region of interest" description="Actin-binding" evidence="1">
    <location>
        <begin position="414"/>
        <end position="497"/>
    </location>
</feature>
<feature type="region of interest" description="Disordered" evidence="6">
    <location>
        <begin position="964"/>
        <end position="1154"/>
    </location>
</feature>
<feature type="region of interest" description="Disordered" evidence="6">
    <location>
        <begin position="1209"/>
        <end position="1316"/>
    </location>
</feature>
<feature type="compositionally biased region" description="Basic residues" evidence="6">
    <location>
        <begin position="1"/>
        <end position="12"/>
    </location>
</feature>
<feature type="compositionally biased region" description="Polar residues" evidence="6">
    <location>
        <begin position="971"/>
        <end position="984"/>
    </location>
</feature>
<feature type="compositionally biased region" description="Polar residues" evidence="6">
    <location>
        <begin position="1018"/>
        <end position="1030"/>
    </location>
</feature>
<feature type="compositionally biased region" description="Low complexity" evidence="6">
    <location>
        <begin position="1042"/>
        <end position="1065"/>
    </location>
</feature>
<feature type="compositionally biased region" description="Polar residues" evidence="6">
    <location>
        <begin position="1097"/>
        <end position="1106"/>
    </location>
</feature>
<feature type="compositionally biased region" description="Low complexity" evidence="6">
    <location>
        <begin position="1117"/>
        <end position="1129"/>
    </location>
</feature>
<feature type="compositionally biased region" description="Pro residues" evidence="6">
    <location>
        <begin position="1137"/>
        <end position="1153"/>
    </location>
</feature>
<feature type="compositionally biased region" description="Pro residues" evidence="6">
    <location>
        <begin position="1223"/>
        <end position="1232"/>
    </location>
</feature>
<feature type="compositionally biased region" description="Low complexity" evidence="6">
    <location>
        <begin position="1233"/>
        <end position="1268"/>
    </location>
</feature>
<feature type="compositionally biased region" description="Acidic residues" evidence="6">
    <location>
        <begin position="1305"/>
        <end position="1316"/>
    </location>
</feature>
<feature type="binding site" evidence="2">
    <location>
        <begin position="136"/>
        <end position="143"/>
    </location>
    <ligand>
        <name>ATP</name>
        <dbReference type="ChEBI" id="CHEBI:30616"/>
    </ligand>
</feature>
<feature type="modified residue" description="Phosphoserine" evidence="7">
    <location>
        <position position="366"/>
    </location>
</feature>
<feature type="mutagenesis site" description="Exhibits a depolarized distribution of cortical actin patches. Shows random budding pattern and is unable to form hyphae." evidence="7">
    <original>S</original>
    <variation>A</variation>
    <location>
        <position position="366"/>
    </location>
</feature>
<feature type="mutagenesis site" description="Exhibits a depolarized distribution of cortical actin patches, but allows hyphae formation." evidence="7">
    <original>S</original>
    <variation>D</variation>
    <location>
        <position position="366"/>
    </location>
</feature>
<protein>
    <recommendedName>
        <fullName>Myosin-5</fullName>
    </recommendedName>
    <alternativeName>
        <fullName>Class I unconventional myosin MYO5</fullName>
    </alternativeName>
    <alternativeName>
        <fullName>Type I myosin MYO5</fullName>
    </alternativeName>
</protein>
<gene>
    <name type="primary">MYO5</name>
    <name type="ordered locus">CAALFM_C405100CA</name>
    <name type="ORF">CaO19.738</name>
    <name type="ORF">CaO19.8357</name>
</gene>
<name>MYO5_CANAL</name>